<gene>
    <name type="primary">NFYB4</name>
    <name type="synonym">HAP3D</name>
    <name type="ordered locus">At1g09030</name>
    <name type="ORF">F7G19.10</name>
</gene>
<proteinExistence type="evidence at protein level"/>
<reference key="1">
    <citation type="journal article" date="2000" name="Nature">
        <title>Sequence and analysis of chromosome 1 of the plant Arabidopsis thaliana.</title>
        <authorList>
            <person name="Theologis A."/>
            <person name="Ecker J.R."/>
            <person name="Palm C.J."/>
            <person name="Federspiel N.A."/>
            <person name="Kaul S."/>
            <person name="White O."/>
            <person name="Alonso J."/>
            <person name="Altafi H."/>
            <person name="Araujo R."/>
            <person name="Bowman C.L."/>
            <person name="Brooks S.Y."/>
            <person name="Buehler E."/>
            <person name="Chan A."/>
            <person name="Chao Q."/>
            <person name="Chen H."/>
            <person name="Cheuk R.F."/>
            <person name="Chin C.W."/>
            <person name="Chung M.K."/>
            <person name="Conn L."/>
            <person name="Conway A.B."/>
            <person name="Conway A.R."/>
            <person name="Creasy T.H."/>
            <person name="Dewar K."/>
            <person name="Dunn P."/>
            <person name="Etgu P."/>
            <person name="Feldblyum T.V."/>
            <person name="Feng J.-D."/>
            <person name="Fong B."/>
            <person name="Fujii C.Y."/>
            <person name="Gill J.E."/>
            <person name="Goldsmith A.D."/>
            <person name="Haas B."/>
            <person name="Hansen N.F."/>
            <person name="Hughes B."/>
            <person name="Huizar L."/>
            <person name="Hunter J.L."/>
            <person name="Jenkins J."/>
            <person name="Johnson-Hopson C."/>
            <person name="Khan S."/>
            <person name="Khaykin E."/>
            <person name="Kim C.J."/>
            <person name="Koo H.L."/>
            <person name="Kremenetskaia I."/>
            <person name="Kurtz D.B."/>
            <person name="Kwan A."/>
            <person name="Lam B."/>
            <person name="Langin-Hooper S."/>
            <person name="Lee A."/>
            <person name="Lee J.M."/>
            <person name="Lenz C.A."/>
            <person name="Li J.H."/>
            <person name="Li Y.-P."/>
            <person name="Lin X."/>
            <person name="Liu S.X."/>
            <person name="Liu Z.A."/>
            <person name="Luros J.S."/>
            <person name="Maiti R."/>
            <person name="Marziali A."/>
            <person name="Militscher J."/>
            <person name="Miranda M."/>
            <person name="Nguyen M."/>
            <person name="Nierman W.C."/>
            <person name="Osborne B.I."/>
            <person name="Pai G."/>
            <person name="Peterson J."/>
            <person name="Pham P.K."/>
            <person name="Rizzo M."/>
            <person name="Rooney T."/>
            <person name="Rowley D."/>
            <person name="Sakano H."/>
            <person name="Salzberg S.L."/>
            <person name="Schwartz J.R."/>
            <person name="Shinn P."/>
            <person name="Southwick A.M."/>
            <person name="Sun H."/>
            <person name="Tallon L.J."/>
            <person name="Tambunga G."/>
            <person name="Toriumi M.J."/>
            <person name="Town C.D."/>
            <person name="Utterback T."/>
            <person name="Van Aken S."/>
            <person name="Vaysberg M."/>
            <person name="Vysotskaia V.S."/>
            <person name="Walker M."/>
            <person name="Wu D."/>
            <person name="Yu G."/>
            <person name="Fraser C.M."/>
            <person name="Venter J.C."/>
            <person name="Davis R.W."/>
        </authorList>
    </citation>
    <scope>NUCLEOTIDE SEQUENCE [LARGE SCALE GENOMIC DNA]</scope>
    <source>
        <strain>cv. Columbia</strain>
    </source>
</reference>
<reference key="2">
    <citation type="journal article" date="2017" name="Plant J.">
        <title>Araport11: a complete reannotation of the Arabidopsis thaliana reference genome.</title>
        <authorList>
            <person name="Cheng C.Y."/>
            <person name="Krishnakumar V."/>
            <person name="Chan A.P."/>
            <person name="Thibaud-Nissen F."/>
            <person name="Schobel S."/>
            <person name="Town C.D."/>
        </authorList>
    </citation>
    <scope>GENOME REANNOTATION</scope>
    <source>
        <strain>cv. Columbia</strain>
    </source>
</reference>
<reference key="3">
    <citation type="submission" date="2006-11" db="EMBL/GenBank/DDBJ databases">
        <title>Arabidopsis ORF clones.</title>
        <authorList>
            <person name="Bautista V.R."/>
            <person name="Kim C.J."/>
            <person name="Chen H."/>
            <person name="Quinitio C."/>
            <person name="Ecker J.R."/>
        </authorList>
    </citation>
    <scope>NUCLEOTIDE SEQUENCE [LARGE SCALE MRNA]</scope>
    <source>
        <strain>cv. Columbia</strain>
    </source>
</reference>
<reference key="4">
    <citation type="journal article" date="2001" name="Gene">
        <title>Regulation of the CCAAT-binding NF-Y subunits in Arabidopsis thaliana.</title>
        <authorList>
            <person name="Gusmaroli G."/>
            <person name="Tonelli C."/>
            <person name="Mantovani R."/>
        </authorList>
    </citation>
    <scope>TISSUE SPECIFICITY</scope>
</reference>
<reference key="5">
    <citation type="journal article" date="2002" name="Gene">
        <title>Regulation of novel members of the Arabidopsis thaliana CCAAT-binding nuclear factor Y subunits.</title>
        <authorList>
            <person name="Gusmaroli G."/>
            <person name="Tonelli C."/>
            <person name="Mantovani R."/>
        </authorList>
    </citation>
    <scope>GENE FAMILY</scope>
    <scope>NOMENCLATURE</scope>
</reference>
<organism>
    <name type="scientific">Arabidopsis thaliana</name>
    <name type="common">Mouse-ear cress</name>
    <dbReference type="NCBI Taxonomy" id="3702"/>
    <lineage>
        <taxon>Eukaryota</taxon>
        <taxon>Viridiplantae</taxon>
        <taxon>Streptophyta</taxon>
        <taxon>Embryophyta</taxon>
        <taxon>Tracheophyta</taxon>
        <taxon>Spermatophyta</taxon>
        <taxon>Magnoliopsida</taxon>
        <taxon>eudicotyledons</taxon>
        <taxon>Gunneridae</taxon>
        <taxon>Pentapetalae</taxon>
        <taxon>rosids</taxon>
        <taxon>malvids</taxon>
        <taxon>Brassicales</taxon>
        <taxon>Brassicaceae</taxon>
        <taxon>Camelineae</taxon>
        <taxon>Arabidopsis</taxon>
    </lineage>
</organism>
<keyword id="KW-0010">Activator</keyword>
<keyword id="KW-0238">DNA-binding</keyword>
<keyword id="KW-0539">Nucleus</keyword>
<keyword id="KW-1185">Reference proteome</keyword>
<keyword id="KW-0804">Transcription</keyword>
<keyword id="KW-0805">Transcription regulation</keyword>
<protein>
    <recommendedName>
        <fullName>Nuclear transcription factor Y subunit B-4</fullName>
        <shortName>AtNF-YB-4</shortName>
    </recommendedName>
    <alternativeName>
        <fullName>Transcriptional activator HAP3D</fullName>
    </alternativeName>
</protein>
<sequence length="139" mass="15741">MTDEDRLLPIANVGRLMKQILPSNAKISKEAKQTVQECATEFISFVTCEASEKCHRENRKTVNGDDIWWALSTLGLDNYADAVGRHLHKYREAERERTEHNKGSNDSGNEKETNTRSDVQNQSTKFIRVVEKGSSSSAR</sequence>
<feature type="chain" id="PRO_0000204618" description="Nuclear transcription factor Y subunit B-4">
    <location>
        <begin position="1"/>
        <end position="139"/>
    </location>
</feature>
<feature type="DNA-binding region" evidence="1">
    <location>
        <begin position="8"/>
        <end position="14"/>
    </location>
</feature>
<feature type="region of interest" description="Subunit association domain (SAD)" evidence="1">
    <location>
        <begin position="35"/>
        <end position="46"/>
    </location>
</feature>
<feature type="region of interest" description="Disordered" evidence="2">
    <location>
        <begin position="90"/>
        <end position="139"/>
    </location>
</feature>
<feature type="compositionally biased region" description="Basic and acidic residues" evidence="2">
    <location>
        <begin position="90"/>
        <end position="115"/>
    </location>
</feature>
<feature type="compositionally biased region" description="Polar residues" evidence="2">
    <location>
        <begin position="116"/>
        <end position="125"/>
    </location>
</feature>
<comment type="function">
    <text>Component of the NF-Y/HAP transcription factor complex. The NF-Y complex stimulates the transcription of various genes by recognizing and binding to a CCAAT motif in promoters.</text>
</comment>
<comment type="subunit">
    <text evidence="1">Heterotrimeric transcription factor composed of three components, NF-YA, NF-YB and NF-YC. NF-YB and NF-YC must interact and dimerize for NF-YA association and DNA binding (By similarity).</text>
</comment>
<comment type="interaction">
    <interactant intactId="EBI-1751677">
        <id>O04027</id>
    </interactant>
    <interactant intactId="EBI-15191737">
        <id>Q58CM8</id>
        <label>NFYC10</label>
    </interactant>
    <organismsDiffer>false</organismsDiffer>
    <experiments>3</experiments>
</comment>
<comment type="interaction">
    <interactant intactId="EBI-1751677">
        <id>O04027</id>
    </interactant>
    <interactant intactId="EBI-15191571">
        <id>Q4PSE2</id>
        <label>NFYC8</label>
    </interactant>
    <organismsDiffer>false</organismsDiffer>
    <experiments>3</experiments>
</comment>
<comment type="interaction">
    <interactant intactId="EBI-1751677">
        <id>O04027</id>
    </interactant>
    <interactant intactId="EBI-2466050">
        <id>Q8L4B2</id>
        <label>NFYC9</label>
    </interactant>
    <organismsDiffer>false</organismsDiffer>
    <experiments>3</experiments>
</comment>
<comment type="interaction">
    <interactant intactId="EBI-1751677">
        <id>O04027</id>
    </interactant>
    <interactant intactId="EBI-1606661">
        <id>Q9LX49</id>
        <label>PRN1</label>
    </interactant>
    <organismsDiffer>false</organismsDiffer>
    <experiments>2</experiments>
</comment>
<comment type="subcellular location">
    <subcellularLocation>
        <location evidence="4">Nucleus</location>
    </subcellularLocation>
</comment>
<comment type="tissue specificity">
    <text evidence="3">Expressed in flowers, siliques and young rosettes.</text>
</comment>
<comment type="similarity">
    <text evidence="4">Belongs to the NFYB/HAP3 subunit family.</text>
</comment>
<accession>O04027</accession>
<accession>A0JPZ3</accession>
<dbReference type="EMBL" id="AC000106">
    <property type="protein sequence ID" value="AAB70405.1"/>
    <property type="molecule type" value="Genomic_DNA"/>
</dbReference>
<dbReference type="EMBL" id="CP002684">
    <property type="protein sequence ID" value="AEE28385.1"/>
    <property type="molecule type" value="Genomic_DNA"/>
</dbReference>
<dbReference type="EMBL" id="BT029363">
    <property type="protein sequence ID" value="ABK32177.1"/>
    <property type="molecule type" value="mRNA"/>
</dbReference>
<dbReference type="PIR" id="C86222">
    <property type="entry name" value="C86222"/>
</dbReference>
<dbReference type="RefSeq" id="NP_172377.1">
    <property type="nucleotide sequence ID" value="NM_100774.2"/>
</dbReference>
<dbReference type="SMR" id="O04027"/>
<dbReference type="BioGRID" id="22665">
    <property type="interactions" value="27"/>
</dbReference>
<dbReference type="FunCoup" id="O04027">
    <property type="interactions" value="19"/>
</dbReference>
<dbReference type="IntAct" id="O04027">
    <property type="interactions" value="22"/>
</dbReference>
<dbReference type="STRING" id="3702.O04027"/>
<dbReference type="PaxDb" id="3702-AT1G09030.1"/>
<dbReference type="EnsemblPlants" id="AT1G09030.1">
    <property type="protein sequence ID" value="AT1G09030.1"/>
    <property type="gene ID" value="AT1G09030"/>
</dbReference>
<dbReference type="GeneID" id="837424"/>
<dbReference type="Gramene" id="AT1G09030.1">
    <property type="protein sequence ID" value="AT1G09030.1"/>
    <property type="gene ID" value="AT1G09030"/>
</dbReference>
<dbReference type="KEGG" id="ath:AT1G09030"/>
<dbReference type="Araport" id="AT1G09030"/>
<dbReference type="TAIR" id="AT1G09030">
    <property type="gene designation" value="NF-YB4"/>
</dbReference>
<dbReference type="eggNOG" id="KOG0869">
    <property type="taxonomic scope" value="Eukaryota"/>
</dbReference>
<dbReference type="HOGENOM" id="CLU_066247_12_2_1"/>
<dbReference type="InParanoid" id="O04027"/>
<dbReference type="OMA" id="HLHKYRE"/>
<dbReference type="OrthoDB" id="386949at2759"/>
<dbReference type="PhylomeDB" id="O04027"/>
<dbReference type="PRO" id="PR:O04027"/>
<dbReference type="Proteomes" id="UP000006548">
    <property type="component" value="Chromosome 1"/>
</dbReference>
<dbReference type="ExpressionAtlas" id="O04027">
    <property type="expression patterns" value="baseline and differential"/>
</dbReference>
<dbReference type="GO" id="GO:0016602">
    <property type="term" value="C:CCAAT-binding factor complex"/>
    <property type="evidence" value="ECO:0007669"/>
    <property type="project" value="InterPro"/>
</dbReference>
<dbReference type="GO" id="GO:0001228">
    <property type="term" value="F:DNA-binding transcription activator activity, RNA polymerase II-specific"/>
    <property type="evidence" value="ECO:0007669"/>
    <property type="project" value="InterPro"/>
</dbReference>
<dbReference type="GO" id="GO:0003700">
    <property type="term" value="F:DNA-binding transcription factor activity"/>
    <property type="evidence" value="ECO:0000250"/>
    <property type="project" value="TAIR"/>
</dbReference>
<dbReference type="GO" id="GO:0046982">
    <property type="term" value="F:protein heterodimerization activity"/>
    <property type="evidence" value="ECO:0007669"/>
    <property type="project" value="InterPro"/>
</dbReference>
<dbReference type="GO" id="GO:0043565">
    <property type="term" value="F:sequence-specific DNA binding"/>
    <property type="evidence" value="ECO:0007669"/>
    <property type="project" value="InterPro"/>
</dbReference>
<dbReference type="GO" id="GO:0006355">
    <property type="term" value="P:regulation of DNA-templated transcription"/>
    <property type="evidence" value="ECO:0000304"/>
    <property type="project" value="TAIR"/>
</dbReference>
<dbReference type="CDD" id="cd22907">
    <property type="entry name" value="HFD_NFYB"/>
    <property type="match status" value="1"/>
</dbReference>
<dbReference type="FunFam" id="1.10.20.10:FF:000130">
    <property type="entry name" value="Nuclear transcription factor Y subunit B-4"/>
    <property type="match status" value="1"/>
</dbReference>
<dbReference type="Gene3D" id="1.10.20.10">
    <property type="entry name" value="Histone, subunit A"/>
    <property type="match status" value="1"/>
</dbReference>
<dbReference type="InterPro" id="IPR003958">
    <property type="entry name" value="CBFA_NFYB_domain"/>
</dbReference>
<dbReference type="InterPro" id="IPR009072">
    <property type="entry name" value="Histone-fold"/>
</dbReference>
<dbReference type="InterPro" id="IPR027113">
    <property type="entry name" value="Transc_fact_NFYB/HAP3"/>
</dbReference>
<dbReference type="InterPro" id="IPR003956">
    <property type="entry name" value="Transcrpt_fac_NFYB/HAP3_CS"/>
</dbReference>
<dbReference type="PANTHER" id="PTHR11064">
    <property type="entry name" value="CCAAT-BINDING TRANSCRIPTION FACTOR-RELATED"/>
    <property type="match status" value="1"/>
</dbReference>
<dbReference type="PANTHER" id="PTHR11064:SF83">
    <property type="entry name" value="NUCLEAR TRANSCRIPTION FACTOR Y SUBUNIT B-4"/>
    <property type="match status" value="1"/>
</dbReference>
<dbReference type="Pfam" id="PF00808">
    <property type="entry name" value="CBFD_NFYB_HMF"/>
    <property type="match status" value="1"/>
</dbReference>
<dbReference type="PRINTS" id="PR00615">
    <property type="entry name" value="CCAATSUBUNTA"/>
</dbReference>
<dbReference type="SUPFAM" id="SSF47113">
    <property type="entry name" value="Histone-fold"/>
    <property type="match status" value="1"/>
</dbReference>
<dbReference type="PROSITE" id="PS00685">
    <property type="entry name" value="NFYB_HAP3"/>
    <property type="match status" value="1"/>
</dbReference>
<name>NFYB4_ARATH</name>
<evidence type="ECO:0000250" key="1"/>
<evidence type="ECO:0000256" key="2">
    <source>
        <dbReference type="SAM" id="MobiDB-lite"/>
    </source>
</evidence>
<evidence type="ECO:0000269" key="3">
    <source>
    </source>
</evidence>
<evidence type="ECO:0000305" key="4"/>